<name>YHHB_SCHPO</name>
<evidence type="ECO:0000255" key="1">
    <source>
        <dbReference type="PROSITE-ProRule" id="PRU00267"/>
    </source>
</evidence>
<evidence type="ECO:0000256" key="2">
    <source>
        <dbReference type="SAM" id="MobiDB-lite"/>
    </source>
</evidence>
<evidence type="ECO:0000269" key="3">
    <source>
    </source>
</evidence>
<evidence type="ECO:0000269" key="4">
    <source>
    </source>
</evidence>
<keyword id="KW-0963">Cytoplasm</keyword>
<keyword id="KW-0238">DNA-binding</keyword>
<keyword id="KW-0597">Phosphoprotein</keyword>
<keyword id="KW-1185">Reference proteome</keyword>
<protein>
    <recommendedName>
        <fullName>HMG box-containing protein C28F2.11</fullName>
    </recommendedName>
</protein>
<dbReference type="EMBL" id="CU329671">
    <property type="protein sequence ID" value="CAB57940.1"/>
    <property type="molecule type" value="Genomic_DNA"/>
</dbReference>
<dbReference type="PIR" id="T40054">
    <property type="entry name" value="T40054"/>
</dbReference>
<dbReference type="SMR" id="Q9USU7"/>
<dbReference type="BioGRID" id="276866">
    <property type="interactions" value="37"/>
</dbReference>
<dbReference type="FunCoup" id="Q9USU7">
    <property type="interactions" value="3"/>
</dbReference>
<dbReference type="STRING" id="284812.Q9USU7"/>
<dbReference type="iPTMnet" id="Q9USU7"/>
<dbReference type="PaxDb" id="4896-SPBC28F2.11.1"/>
<dbReference type="EnsemblFungi" id="SPBC28F2.11.1">
    <property type="protein sequence ID" value="SPBC28F2.11.1:pep"/>
    <property type="gene ID" value="SPBC28F2.11"/>
</dbReference>
<dbReference type="KEGG" id="spo:2540337"/>
<dbReference type="PomBase" id="SPBC28F2.11"/>
<dbReference type="VEuPathDB" id="FungiDB:SPBC28F2.11"/>
<dbReference type="eggNOG" id="KOG0381">
    <property type="taxonomic scope" value="Eukaryota"/>
</dbReference>
<dbReference type="HOGENOM" id="CLU_897599_0_0_1"/>
<dbReference type="InParanoid" id="Q9USU7"/>
<dbReference type="OMA" id="HNIDDFE"/>
<dbReference type="Reactome" id="R-SPO-140342">
    <property type="pathway name" value="Apoptosis induced DNA fragmentation"/>
</dbReference>
<dbReference type="Reactome" id="R-SPO-163282">
    <property type="pathway name" value="Mitochondrial transcription initiation"/>
</dbReference>
<dbReference type="Reactome" id="R-SPO-5620971">
    <property type="pathway name" value="Pyroptosis"/>
</dbReference>
<dbReference type="Reactome" id="R-SPO-5686938">
    <property type="pathway name" value="Regulation of TLR by endogenous ligand"/>
</dbReference>
<dbReference type="Reactome" id="R-SPO-6798695">
    <property type="pathway name" value="Neutrophil degranulation"/>
</dbReference>
<dbReference type="Reactome" id="R-SPO-9837999">
    <property type="pathway name" value="Mitochondrial protein degradation"/>
</dbReference>
<dbReference type="PRO" id="PR:Q9USU7"/>
<dbReference type="Proteomes" id="UP000002485">
    <property type="component" value="Chromosome II"/>
</dbReference>
<dbReference type="GO" id="GO:0005737">
    <property type="term" value="C:cytoplasm"/>
    <property type="evidence" value="ECO:0007669"/>
    <property type="project" value="UniProtKB-SubCell"/>
</dbReference>
<dbReference type="GO" id="GO:0005730">
    <property type="term" value="C:nucleolus"/>
    <property type="evidence" value="ECO:0000314"/>
    <property type="project" value="PomBase"/>
</dbReference>
<dbReference type="GO" id="GO:0003677">
    <property type="term" value="F:DNA binding"/>
    <property type="evidence" value="ECO:0000255"/>
    <property type="project" value="PomBase"/>
</dbReference>
<dbReference type="GO" id="GO:0001181">
    <property type="term" value="F:RNA polymerase I general transcription initiation factor activity"/>
    <property type="evidence" value="ECO:0000303"/>
    <property type="project" value="PomBase"/>
</dbReference>
<dbReference type="GO" id="GO:0006360">
    <property type="term" value="P:transcription by RNA polymerase I"/>
    <property type="evidence" value="ECO:0000315"/>
    <property type="project" value="PomBase"/>
</dbReference>
<dbReference type="GO" id="GO:0006361">
    <property type="term" value="P:transcription initiation at RNA polymerase I promoter"/>
    <property type="evidence" value="ECO:0000250"/>
    <property type="project" value="PomBase"/>
</dbReference>
<dbReference type="Gene3D" id="1.10.30.10">
    <property type="entry name" value="High mobility group box domain"/>
    <property type="match status" value="1"/>
</dbReference>
<dbReference type="InterPro" id="IPR009071">
    <property type="entry name" value="HMG_box_dom"/>
</dbReference>
<dbReference type="InterPro" id="IPR036910">
    <property type="entry name" value="HMG_box_dom_sf"/>
</dbReference>
<dbReference type="InterPro" id="IPR050342">
    <property type="entry name" value="HMGB"/>
</dbReference>
<dbReference type="PANTHER" id="PTHR48112">
    <property type="entry name" value="HIGH MOBILITY GROUP PROTEIN DSP1"/>
    <property type="match status" value="1"/>
</dbReference>
<dbReference type="PANTHER" id="PTHR48112:SF22">
    <property type="entry name" value="MITOCHONDRIAL TRANSCRIPTION FACTOR A, ISOFORM B"/>
    <property type="match status" value="1"/>
</dbReference>
<dbReference type="Pfam" id="PF09011">
    <property type="entry name" value="HMG_box_2"/>
    <property type="match status" value="1"/>
</dbReference>
<dbReference type="SMART" id="SM00398">
    <property type="entry name" value="HMG"/>
    <property type="match status" value="1"/>
</dbReference>
<dbReference type="SUPFAM" id="SSF47095">
    <property type="entry name" value="HMG-box"/>
    <property type="match status" value="1"/>
</dbReference>
<dbReference type="PROSITE" id="PS50118">
    <property type="entry name" value="HMG_BOX_2"/>
    <property type="match status" value="1"/>
</dbReference>
<proteinExistence type="evidence at protein level"/>
<organism>
    <name type="scientific">Schizosaccharomyces pombe (strain 972 / ATCC 24843)</name>
    <name type="common">Fission yeast</name>
    <dbReference type="NCBI Taxonomy" id="284812"/>
    <lineage>
        <taxon>Eukaryota</taxon>
        <taxon>Fungi</taxon>
        <taxon>Dikarya</taxon>
        <taxon>Ascomycota</taxon>
        <taxon>Taphrinomycotina</taxon>
        <taxon>Schizosaccharomycetes</taxon>
        <taxon>Schizosaccharomycetales</taxon>
        <taxon>Schizosaccharomycetaceae</taxon>
        <taxon>Schizosaccharomyces</taxon>
    </lineage>
</organism>
<sequence length="310" mass="33891">MAQNSTQLEKISGSFTRLAEAFQLALTACREIEESLPSILGEKSEVSKPFKPAVTDPSNAKKEINMAIESPSKKATSPKKATPAAVAPVEATSAVDTSEAVASMTPNKRKARDPAQPKRPPSAYNLFQKNQRSEIKESLGEKSNDVKEVNKAMHEKWGSLSEDDRKTYEEEASKLREAYEEEMAAYNASKENASVADSRVTAEETSTKPSEDLSSPTKKDLIDFSETRPLAQASRATPDIKEQHAKKPKRKHTRSTVPTSNVEPVSQPQPSPDKIVSSPNPPSAKREKKKRRKSSMSSSITTPPTAKVAN</sequence>
<gene>
    <name type="ORF">SPBC28F2.11</name>
</gene>
<reference key="1">
    <citation type="journal article" date="2002" name="Nature">
        <title>The genome sequence of Schizosaccharomyces pombe.</title>
        <authorList>
            <person name="Wood V."/>
            <person name="Gwilliam R."/>
            <person name="Rajandream M.A."/>
            <person name="Lyne M.H."/>
            <person name="Lyne R."/>
            <person name="Stewart A."/>
            <person name="Sgouros J.G."/>
            <person name="Peat N."/>
            <person name="Hayles J."/>
            <person name="Baker S.G."/>
            <person name="Basham D."/>
            <person name="Bowman S."/>
            <person name="Brooks K."/>
            <person name="Brown D."/>
            <person name="Brown S."/>
            <person name="Chillingworth T."/>
            <person name="Churcher C.M."/>
            <person name="Collins M."/>
            <person name="Connor R."/>
            <person name="Cronin A."/>
            <person name="Davis P."/>
            <person name="Feltwell T."/>
            <person name="Fraser A."/>
            <person name="Gentles S."/>
            <person name="Goble A."/>
            <person name="Hamlin N."/>
            <person name="Harris D.E."/>
            <person name="Hidalgo J."/>
            <person name="Hodgson G."/>
            <person name="Holroyd S."/>
            <person name="Hornsby T."/>
            <person name="Howarth S."/>
            <person name="Huckle E.J."/>
            <person name="Hunt S."/>
            <person name="Jagels K."/>
            <person name="James K.D."/>
            <person name="Jones L."/>
            <person name="Jones M."/>
            <person name="Leather S."/>
            <person name="McDonald S."/>
            <person name="McLean J."/>
            <person name="Mooney P."/>
            <person name="Moule S."/>
            <person name="Mungall K.L."/>
            <person name="Murphy L.D."/>
            <person name="Niblett D."/>
            <person name="Odell C."/>
            <person name="Oliver K."/>
            <person name="O'Neil S."/>
            <person name="Pearson D."/>
            <person name="Quail M.A."/>
            <person name="Rabbinowitsch E."/>
            <person name="Rutherford K.M."/>
            <person name="Rutter S."/>
            <person name="Saunders D."/>
            <person name="Seeger K."/>
            <person name="Sharp S."/>
            <person name="Skelton J."/>
            <person name="Simmonds M.N."/>
            <person name="Squares R."/>
            <person name="Squares S."/>
            <person name="Stevens K."/>
            <person name="Taylor K."/>
            <person name="Taylor R.G."/>
            <person name="Tivey A."/>
            <person name="Walsh S.V."/>
            <person name="Warren T."/>
            <person name="Whitehead S."/>
            <person name="Woodward J.R."/>
            <person name="Volckaert G."/>
            <person name="Aert R."/>
            <person name="Robben J."/>
            <person name="Grymonprez B."/>
            <person name="Weltjens I."/>
            <person name="Vanstreels E."/>
            <person name="Rieger M."/>
            <person name="Schaefer M."/>
            <person name="Mueller-Auer S."/>
            <person name="Gabel C."/>
            <person name="Fuchs M."/>
            <person name="Duesterhoeft A."/>
            <person name="Fritzc C."/>
            <person name="Holzer E."/>
            <person name="Moestl D."/>
            <person name="Hilbert H."/>
            <person name="Borzym K."/>
            <person name="Langer I."/>
            <person name="Beck A."/>
            <person name="Lehrach H."/>
            <person name="Reinhardt R."/>
            <person name="Pohl T.M."/>
            <person name="Eger P."/>
            <person name="Zimmermann W."/>
            <person name="Wedler H."/>
            <person name="Wambutt R."/>
            <person name="Purnelle B."/>
            <person name="Goffeau A."/>
            <person name="Cadieu E."/>
            <person name="Dreano S."/>
            <person name="Gloux S."/>
            <person name="Lelaure V."/>
            <person name="Mottier S."/>
            <person name="Galibert F."/>
            <person name="Aves S.J."/>
            <person name="Xiang Z."/>
            <person name="Hunt C."/>
            <person name="Moore K."/>
            <person name="Hurst S.M."/>
            <person name="Lucas M."/>
            <person name="Rochet M."/>
            <person name="Gaillardin C."/>
            <person name="Tallada V.A."/>
            <person name="Garzon A."/>
            <person name="Thode G."/>
            <person name="Daga R.R."/>
            <person name="Cruzado L."/>
            <person name="Jimenez J."/>
            <person name="Sanchez M."/>
            <person name="del Rey F."/>
            <person name="Benito J."/>
            <person name="Dominguez A."/>
            <person name="Revuelta J.L."/>
            <person name="Moreno S."/>
            <person name="Armstrong J."/>
            <person name="Forsburg S.L."/>
            <person name="Cerutti L."/>
            <person name="Lowe T."/>
            <person name="McCombie W.R."/>
            <person name="Paulsen I."/>
            <person name="Potashkin J."/>
            <person name="Shpakovski G.V."/>
            <person name="Ussery D."/>
            <person name="Barrell B.G."/>
            <person name="Nurse P."/>
        </authorList>
    </citation>
    <scope>NUCLEOTIDE SEQUENCE [LARGE SCALE GENOMIC DNA]</scope>
    <source>
        <strain>972 / ATCC 24843</strain>
    </source>
</reference>
<reference key="2">
    <citation type="journal article" date="2006" name="Nat. Biotechnol.">
        <title>ORFeome cloning and global analysis of protein localization in the fission yeast Schizosaccharomyces pombe.</title>
        <authorList>
            <person name="Matsuyama A."/>
            <person name="Arai R."/>
            <person name="Yashiroda Y."/>
            <person name="Shirai A."/>
            <person name="Kamata A."/>
            <person name="Sekido S."/>
            <person name="Kobayashi Y."/>
            <person name="Hashimoto A."/>
            <person name="Hamamoto M."/>
            <person name="Hiraoka Y."/>
            <person name="Horinouchi S."/>
            <person name="Yoshida M."/>
        </authorList>
    </citation>
    <scope>SUBCELLULAR LOCATION [LARGE SCALE ANALYSIS]</scope>
</reference>
<reference key="3">
    <citation type="journal article" date="2008" name="J. Proteome Res.">
        <title>Phosphoproteome analysis of fission yeast.</title>
        <authorList>
            <person name="Wilson-Grady J.T."/>
            <person name="Villen J."/>
            <person name="Gygi S.P."/>
        </authorList>
    </citation>
    <scope>PHOSPHORYLATION [LARGE SCALE ANALYSIS] AT SER-70; THR-105; SER-161; SER-214; SER-215; THR-217; THR-237; SER-271; SER-278; SER-294; SER-295; SER-297; THR-302 AND THR-305</scope>
    <scope>IDENTIFICATION BY MASS SPECTROMETRY</scope>
</reference>
<accession>Q9USU7</accession>
<feature type="chain" id="PRO_0000311771" description="HMG box-containing protein C28F2.11">
    <location>
        <begin position="1"/>
        <end position="310"/>
    </location>
</feature>
<feature type="DNA-binding region" description="HMG box" evidence="1">
    <location>
        <begin position="117"/>
        <end position="187"/>
    </location>
</feature>
<feature type="region of interest" description="Disordered" evidence="2">
    <location>
        <begin position="69"/>
        <end position="310"/>
    </location>
</feature>
<feature type="compositionally biased region" description="Low complexity" evidence="2">
    <location>
        <begin position="69"/>
        <end position="95"/>
    </location>
</feature>
<feature type="compositionally biased region" description="Basic and acidic residues" evidence="2">
    <location>
        <begin position="131"/>
        <end position="178"/>
    </location>
</feature>
<feature type="compositionally biased region" description="Basic and acidic residues" evidence="2">
    <location>
        <begin position="200"/>
        <end position="226"/>
    </location>
</feature>
<feature type="compositionally biased region" description="Polar residues" evidence="2">
    <location>
        <begin position="255"/>
        <end position="268"/>
    </location>
</feature>
<feature type="modified residue" description="Phosphoserine" evidence="4">
    <location>
        <position position="70"/>
    </location>
</feature>
<feature type="modified residue" description="Phosphothreonine" evidence="4">
    <location>
        <position position="105"/>
    </location>
</feature>
<feature type="modified residue" description="Phosphoserine" evidence="4">
    <location>
        <position position="161"/>
    </location>
</feature>
<feature type="modified residue" description="Phosphoserine" evidence="4">
    <location>
        <position position="214"/>
    </location>
</feature>
<feature type="modified residue" description="Phosphoserine" evidence="4">
    <location>
        <position position="215"/>
    </location>
</feature>
<feature type="modified residue" description="Phosphothreonine" evidence="4">
    <location>
        <position position="217"/>
    </location>
</feature>
<feature type="modified residue" description="Phosphothreonine" evidence="4">
    <location>
        <position position="237"/>
    </location>
</feature>
<feature type="modified residue" description="Phosphoserine" evidence="4">
    <location>
        <position position="271"/>
    </location>
</feature>
<feature type="modified residue" description="Phosphoserine" evidence="4">
    <location>
        <position position="278"/>
    </location>
</feature>
<feature type="modified residue" description="Phosphoserine" evidence="4">
    <location>
        <position position="294"/>
    </location>
</feature>
<feature type="modified residue" description="Phosphoserine" evidence="4">
    <location>
        <position position="295"/>
    </location>
</feature>
<feature type="modified residue" description="Phosphoserine" evidence="4">
    <location>
        <position position="297"/>
    </location>
</feature>
<feature type="modified residue" description="Phosphothreonine" evidence="4">
    <location>
        <position position="302"/>
    </location>
</feature>
<feature type="modified residue" description="Phosphothreonine" evidence="4">
    <location>
        <position position="305"/>
    </location>
</feature>
<comment type="subcellular location">
    <subcellularLocation>
        <location evidence="3">Cytoplasm</location>
    </subcellularLocation>
</comment>